<evidence type="ECO:0000250" key="1"/>
<evidence type="ECO:0000255" key="2"/>
<evidence type="ECO:0000305" key="3"/>
<comment type="function">
    <text evidence="1">Extracellular aminopeptidase that allows assimilation of proteinaceous substrates.</text>
</comment>
<comment type="cofactor">
    <cofactor evidence="1">
        <name>Zn(2+)</name>
        <dbReference type="ChEBI" id="CHEBI:29105"/>
    </cofactor>
    <text evidence="1">Binds 2 Zn(2+) ions per subunit.</text>
</comment>
<comment type="subunit">
    <text evidence="1">Monomer.</text>
</comment>
<comment type="subcellular location">
    <subcellularLocation>
        <location evidence="1">Secreted</location>
    </subcellularLocation>
</comment>
<comment type="similarity">
    <text evidence="3">Belongs to the peptidase M28 family. M28E subfamily.</text>
</comment>
<accession>B2WMR5</accession>
<dbReference type="EC" id="3.4.11.-"/>
<dbReference type="EMBL" id="DS231630">
    <property type="protein sequence ID" value="EDU44325.1"/>
    <property type="molecule type" value="Genomic_DNA"/>
</dbReference>
<dbReference type="RefSeq" id="XP_001941606.1">
    <property type="nucleotide sequence ID" value="XM_001941571.1"/>
</dbReference>
<dbReference type="SMR" id="B2WMR5"/>
<dbReference type="FunCoup" id="B2WMR5">
    <property type="interactions" value="25"/>
</dbReference>
<dbReference type="STRING" id="426418.B2WMR5"/>
<dbReference type="MEROPS" id="M28.022"/>
<dbReference type="GlyCosmos" id="B2WMR5">
    <property type="glycosylation" value="3 sites, No reported glycans"/>
</dbReference>
<dbReference type="EnsemblFungi" id="EDU44325">
    <property type="protein sequence ID" value="EDU44325"/>
    <property type="gene ID" value="PTRG_11275"/>
</dbReference>
<dbReference type="GeneID" id="6349588"/>
<dbReference type="KEGG" id="ptrr:6349588"/>
<dbReference type="eggNOG" id="KOG2195">
    <property type="taxonomic scope" value="Eukaryota"/>
</dbReference>
<dbReference type="HOGENOM" id="CLU_025866_0_0_1"/>
<dbReference type="InParanoid" id="B2WMR5"/>
<dbReference type="OMA" id="GMLQQDM"/>
<dbReference type="OrthoDB" id="4506at28556"/>
<dbReference type="Proteomes" id="UP000001471">
    <property type="component" value="Unassembled WGS sequence"/>
</dbReference>
<dbReference type="GO" id="GO:0005576">
    <property type="term" value="C:extracellular region"/>
    <property type="evidence" value="ECO:0007669"/>
    <property type="project" value="UniProtKB-SubCell"/>
</dbReference>
<dbReference type="GO" id="GO:0004177">
    <property type="term" value="F:aminopeptidase activity"/>
    <property type="evidence" value="ECO:0007669"/>
    <property type="project" value="UniProtKB-KW"/>
</dbReference>
<dbReference type="GO" id="GO:0046872">
    <property type="term" value="F:metal ion binding"/>
    <property type="evidence" value="ECO:0007669"/>
    <property type="project" value="UniProtKB-KW"/>
</dbReference>
<dbReference type="GO" id="GO:0008235">
    <property type="term" value="F:metalloexopeptidase activity"/>
    <property type="evidence" value="ECO:0007669"/>
    <property type="project" value="InterPro"/>
</dbReference>
<dbReference type="GO" id="GO:0006508">
    <property type="term" value="P:proteolysis"/>
    <property type="evidence" value="ECO:0007669"/>
    <property type="project" value="UniProtKB-KW"/>
</dbReference>
<dbReference type="CDD" id="cd03879">
    <property type="entry name" value="M28_AAP"/>
    <property type="match status" value="1"/>
</dbReference>
<dbReference type="FunFam" id="3.40.630.10:FF:000042">
    <property type="entry name" value="Peptide hydrolase"/>
    <property type="match status" value="1"/>
</dbReference>
<dbReference type="Gene3D" id="3.40.630.10">
    <property type="entry name" value="Zn peptidases"/>
    <property type="match status" value="1"/>
</dbReference>
<dbReference type="InterPro" id="IPR045175">
    <property type="entry name" value="M28_fam"/>
</dbReference>
<dbReference type="InterPro" id="IPR007484">
    <property type="entry name" value="Peptidase_M28"/>
</dbReference>
<dbReference type="PANTHER" id="PTHR12147:SF56">
    <property type="entry name" value="AMINOPEPTIDASE YDR415C-RELATED"/>
    <property type="match status" value="1"/>
</dbReference>
<dbReference type="PANTHER" id="PTHR12147">
    <property type="entry name" value="METALLOPEPTIDASE M28 FAMILY MEMBER"/>
    <property type="match status" value="1"/>
</dbReference>
<dbReference type="Pfam" id="PF04389">
    <property type="entry name" value="Peptidase_M28"/>
    <property type="match status" value="1"/>
</dbReference>
<dbReference type="SUPFAM" id="SSF53187">
    <property type="entry name" value="Zn-dependent exopeptidases"/>
    <property type="match status" value="1"/>
</dbReference>
<reference key="1">
    <citation type="journal article" date="2013" name="G3 (Bethesda)">
        <title>Comparative genomics of a plant-pathogenic fungus, Pyrenophora tritici-repentis, reveals transduplication and the impact of repeat elements on pathogenicity and population divergence.</title>
        <authorList>
            <person name="Manning V.A."/>
            <person name="Pandelova I."/>
            <person name="Dhillon B."/>
            <person name="Wilhelm L.J."/>
            <person name="Goodwin S.B."/>
            <person name="Berlin A.M."/>
            <person name="Figueroa M."/>
            <person name="Freitag M."/>
            <person name="Hane J.K."/>
            <person name="Henrissat B."/>
            <person name="Holman W.H."/>
            <person name="Kodira C.D."/>
            <person name="Martin J."/>
            <person name="Oliver R.P."/>
            <person name="Robbertse B."/>
            <person name="Schackwitz W."/>
            <person name="Schwartz D.C."/>
            <person name="Spatafora J.W."/>
            <person name="Turgeon B.G."/>
            <person name="Yandava C."/>
            <person name="Young S."/>
            <person name="Zhou S."/>
            <person name="Zeng Q."/>
            <person name="Grigoriev I.V."/>
            <person name="Ma L.-J."/>
            <person name="Ciuffetti L.M."/>
        </authorList>
    </citation>
    <scope>NUCLEOTIDE SEQUENCE [LARGE SCALE GENOMIC DNA]</scope>
    <source>
        <strain>Pt-1C-BFP</strain>
    </source>
</reference>
<gene>
    <name type="primary">lap1</name>
    <name type="ORF">PTRG_11275</name>
</gene>
<keyword id="KW-0031">Aminopeptidase</keyword>
<keyword id="KW-1015">Disulfide bond</keyword>
<keyword id="KW-0325">Glycoprotein</keyword>
<keyword id="KW-0378">Hydrolase</keyword>
<keyword id="KW-0479">Metal-binding</keyword>
<keyword id="KW-0645">Protease</keyword>
<keyword id="KW-1185">Reference proteome</keyword>
<keyword id="KW-0964">Secreted</keyword>
<keyword id="KW-0732">Signal</keyword>
<keyword id="KW-0862">Zinc</keyword>
<keyword id="KW-0865">Zymogen</keyword>
<organism>
    <name type="scientific">Pyrenophora tritici-repentis (strain Pt-1C-BFP)</name>
    <name type="common">Wheat tan spot fungus</name>
    <name type="synonym">Drechslera tritici-repentis</name>
    <dbReference type="NCBI Taxonomy" id="426418"/>
    <lineage>
        <taxon>Eukaryota</taxon>
        <taxon>Fungi</taxon>
        <taxon>Dikarya</taxon>
        <taxon>Ascomycota</taxon>
        <taxon>Pezizomycotina</taxon>
        <taxon>Dothideomycetes</taxon>
        <taxon>Pleosporomycetidae</taxon>
        <taxon>Pleosporales</taxon>
        <taxon>Pleosporineae</taxon>
        <taxon>Pleosporaceae</taxon>
        <taxon>Pyrenophora</taxon>
    </lineage>
</organism>
<name>LAP1_PYRTR</name>
<proteinExistence type="inferred from homology"/>
<sequence>MKSAALLLPLYTAAFAAAAFHHEHAQAVIQDQQLTIVEPDEYLIELSPGETRWVNENEKWELRKKNINFFDITHNAELGTLNHRINAESVKYPSKPVFNETLAPLLKELDKNNMRAHLETFTSFHTRYYKSQYGVQSSAWLLGQVNKTLADAGAINASVKAFPHPWGQSSIIATIPGKSDKTIVIGAHQDSINLFFPAFLAAPGADDDGSGTVTILEALRVLLKSDEILKGEAENTIEFHWYSAEEGGLLGSQAIFQSYEKEARDVKAMLQQDMTGYVQKTLDAGEPESVGVITDFVDPGLTEFIKKIITVYCDIPYVLTKCGYACSDHASASKAGYPSAFVIESDFKYSDKKIHTTEDKIEYLSFDHMLQHARMTLALAYELAFAEFK</sequence>
<protein>
    <recommendedName>
        <fullName>Leucine aminopeptidase 1</fullName>
        <ecNumber>3.4.11.-</ecNumber>
    </recommendedName>
    <alternativeName>
        <fullName>Leucyl aminopeptidase 1</fullName>
        <shortName>LAP1</shortName>
    </alternativeName>
</protein>
<feature type="signal peptide" evidence="2">
    <location>
        <begin position="1"/>
        <end position="18"/>
    </location>
</feature>
<feature type="propeptide" id="PRO_0000412444" evidence="1">
    <location>
        <begin position="19"/>
        <end position="89"/>
    </location>
</feature>
<feature type="chain" id="PRO_0000412445" description="Leucine aminopeptidase 1">
    <location>
        <begin position="90"/>
        <end position="389"/>
    </location>
</feature>
<feature type="binding site" evidence="1">
    <location>
        <position position="188"/>
    </location>
    <ligand>
        <name>Zn(2+)</name>
        <dbReference type="ChEBI" id="CHEBI:29105"/>
        <label>1</label>
    </ligand>
</feature>
<feature type="binding site" evidence="1">
    <location>
        <position position="207"/>
    </location>
    <ligand>
        <name>Zn(2+)</name>
        <dbReference type="ChEBI" id="CHEBI:29105"/>
        <label>1</label>
    </ligand>
</feature>
<feature type="binding site" evidence="1">
    <location>
        <position position="207"/>
    </location>
    <ligand>
        <name>Zn(2+)</name>
        <dbReference type="ChEBI" id="CHEBI:29105"/>
        <label>2</label>
        <note>catalytic</note>
    </ligand>
</feature>
<feature type="binding site" evidence="1">
    <location>
        <position position="246"/>
    </location>
    <ligand>
        <name>Zn(2+)</name>
        <dbReference type="ChEBI" id="CHEBI:29105"/>
        <label>2</label>
        <note>catalytic</note>
    </ligand>
</feature>
<feature type="binding site" evidence="1">
    <location>
        <position position="273"/>
    </location>
    <ligand>
        <name>Zn(2+)</name>
        <dbReference type="ChEBI" id="CHEBI:29105"/>
        <label>1</label>
    </ligand>
</feature>
<feature type="binding site" evidence="1">
    <location>
        <position position="355"/>
    </location>
    <ligand>
        <name>Zn(2+)</name>
        <dbReference type="ChEBI" id="CHEBI:29105"/>
        <label>2</label>
        <note>catalytic</note>
    </ligand>
</feature>
<feature type="glycosylation site" description="N-linked (GlcNAc...) asparagine" evidence="2">
    <location>
        <position position="99"/>
    </location>
</feature>
<feature type="glycosylation site" description="N-linked (GlcNAc...) asparagine" evidence="2">
    <location>
        <position position="146"/>
    </location>
</feature>
<feature type="glycosylation site" description="N-linked (GlcNAc...) asparagine" evidence="2">
    <location>
        <position position="156"/>
    </location>
</feature>
<feature type="disulfide bond" evidence="1">
    <location>
        <begin position="322"/>
        <end position="326"/>
    </location>
</feature>